<organism>
    <name type="scientific">Streptococcus suis (strain 98HAH33)</name>
    <dbReference type="NCBI Taxonomy" id="391296"/>
    <lineage>
        <taxon>Bacteria</taxon>
        <taxon>Bacillati</taxon>
        <taxon>Bacillota</taxon>
        <taxon>Bacilli</taxon>
        <taxon>Lactobacillales</taxon>
        <taxon>Streptococcaceae</taxon>
        <taxon>Streptococcus</taxon>
    </lineage>
</organism>
<comment type="function">
    <text evidence="1">Catalyzes the reversible interconversion of serine and glycine with tetrahydrofolate (THF) serving as the one-carbon carrier. This reaction serves as the major source of one-carbon groups required for the biosynthesis of purines, thymidylate, methionine, and other important biomolecules. Also exhibits THF-independent aldolase activity toward beta-hydroxyamino acids, producing glycine and aldehydes, via a retro-aldol mechanism.</text>
</comment>
<comment type="catalytic activity">
    <reaction evidence="1">
        <text>(6R)-5,10-methylene-5,6,7,8-tetrahydrofolate + glycine + H2O = (6S)-5,6,7,8-tetrahydrofolate + L-serine</text>
        <dbReference type="Rhea" id="RHEA:15481"/>
        <dbReference type="ChEBI" id="CHEBI:15377"/>
        <dbReference type="ChEBI" id="CHEBI:15636"/>
        <dbReference type="ChEBI" id="CHEBI:33384"/>
        <dbReference type="ChEBI" id="CHEBI:57305"/>
        <dbReference type="ChEBI" id="CHEBI:57453"/>
        <dbReference type="EC" id="2.1.2.1"/>
    </reaction>
</comment>
<comment type="cofactor">
    <cofactor evidence="1">
        <name>pyridoxal 5'-phosphate</name>
        <dbReference type="ChEBI" id="CHEBI:597326"/>
    </cofactor>
</comment>
<comment type="pathway">
    <text evidence="1">One-carbon metabolism; tetrahydrofolate interconversion.</text>
</comment>
<comment type="pathway">
    <text evidence="1">Amino-acid biosynthesis; glycine biosynthesis; glycine from L-serine: step 1/1.</text>
</comment>
<comment type="subunit">
    <text evidence="1">Homodimer.</text>
</comment>
<comment type="subcellular location">
    <subcellularLocation>
        <location evidence="1">Cytoplasm</location>
    </subcellularLocation>
</comment>
<comment type="similarity">
    <text evidence="1">Belongs to the SHMT family.</text>
</comment>
<dbReference type="EC" id="2.1.2.1" evidence="1"/>
<dbReference type="EMBL" id="CP000408">
    <property type="protein sequence ID" value="ABP92008.1"/>
    <property type="molecule type" value="Genomic_DNA"/>
</dbReference>
<dbReference type="SMR" id="A4W0W9"/>
<dbReference type="KEGG" id="ssv:SSU98_0850"/>
<dbReference type="HOGENOM" id="CLU_022477_2_1_9"/>
<dbReference type="UniPathway" id="UPA00193"/>
<dbReference type="UniPathway" id="UPA00288">
    <property type="reaction ID" value="UER01023"/>
</dbReference>
<dbReference type="GO" id="GO:0005829">
    <property type="term" value="C:cytosol"/>
    <property type="evidence" value="ECO:0007669"/>
    <property type="project" value="TreeGrafter"/>
</dbReference>
<dbReference type="GO" id="GO:0004372">
    <property type="term" value="F:glycine hydroxymethyltransferase activity"/>
    <property type="evidence" value="ECO:0007669"/>
    <property type="project" value="UniProtKB-UniRule"/>
</dbReference>
<dbReference type="GO" id="GO:0030170">
    <property type="term" value="F:pyridoxal phosphate binding"/>
    <property type="evidence" value="ECO:0007669"/>
    <property type="project" value="UniProtKB-UniRule"/>
</dbReference>
<dbReference type="GO" id="GO:0019264">
    <property type="term" value="P:glycine biosynthetic process from serine"/>
    <property type="evidence" value="ECO:0007669"/>
    <property type="project" value="UniProtKB-UniRule"/>
</dbReference>
<dbReference type="GO" id="GO:0035999">
    <property type="term" value="P:tetrahydrofolate interconversion"/>
    <property type="evidence" value="ECO:0007669"/>
    <property type="project" value="UniProtKB-UniRule"/>
</dbReference>
<dbReference type="CDD" id="cd00378">
    <property type="entry name" value="SHMT"/>
    <property type="match status" value="1"/>
</dbReference>
<dbReference type="FunFam" id="3.40.640.10:FF:000001">
    <property type="entry name" value="Serine hydroxymethyltransferase"/>
    <property type="match status" value="1"/>
</dbReference>
<dbReference type="FunFam" id="3.90.1150.10:FF:000072">
    <property type="entry name" value="Serine hydroxymethyltransferase"/>
    <property type="match status" value="1"/>
</dbReference>
<dbReference type="Gene3D" id="3.90.1150.10">
    <property type="entry name" value="Aspartate Aminotransferase, domain 1"/>
    <property type="match status" value="1"/>
</dbReference>
<dbReference type="Gene3D" id="3.40.640.10">
    <property type="entry name" value="Type I PLP-dependent aspartate aminotransferase-like (Major domain)"/>
    <property type="match status" value="1"/>
</dbReference>
<dbReference type="HAMAP" id="MF_00051">
    <property type="entry name" value="SHMT"/>
    <property type="match status" value="1"/>
</dbReference>
<dbReference type="InterPro" id="IPR015424">
    <property type="entry name" value="PyrdxlP-dep_Trfase"/>
</dbReference>
<dbReference type="InterPro" id="IPR015421">
    <property type="entry name" value="PyrdxlP-dep_Trfase_major"/>
</dbReference>
<dbReference type="InterPro" id="IPR015422">
    <property type="entry name" value="PyrdxlP-dep_Trfase_small"/>
</dbReference>
<dbReference type="InterPro" id="IPR001085">
    <property type="entry name" value="Ser_HO-MeTrfase"/>
</dbReference>
<dbReference type="InterPro" id="IPR049943">
    <property type="entry name" value="Ser_HO-MeTrfase-like"/>
</dbReference>
<dbReference type="InterPro" id="IPR019798">
    <property type="entry name" value="Ser_HO-MeTrfase_PLP_BS"/>
</dbReference>
<dbReference type="InterPro" id="IPR039429">
    <property type="entry name" value="SHMT-like_dom"/>
</dbReference>
<dbReference type="NCBIfam" id="NF000586">
    <property type="entry name" value="PRK00011.1"/>
    <property type="match status" value="1"/>
</dbReference>
<dbReference type="PANTHER" id="PTHR11680">
    <property type="entry name" value="SERINE HYDROXYMETHYLTRANSFERASE"/>
    <property type="match status" value="1"/>
</dbReference>
<dbReference type="PANTHER" id="PTHR11680:SF35">
    <property type="entry name" value="SERINE HYDROXYMETHYLTRANSFERASE 1"/>
    <property type="match status" value="1"/>
</dbReference>
<dbReference type="Pfam" id="PF00464">
    <property type="entry name" value="SHMT"/>
    <property type="match status" value="1"/>
</dbReference>
<dbReference type="PIRSF" id="PIRSF000412">
    <property type="entry name" value="SHMT"/>
    <property type="match status" value="1"/>
</dbReference>
<dbReference type="SUPFAM" id="SSF53383">
    <property type="entry name" value="PLP-dependent transferases"/>
    <property type="match status" value="1"/>
</dbReference>
<dbReference type="PROSITE" id="PS00096">
    <property type="entry name" value="SHMT"/>
    <property type="match status" value="1"/>
</dbReference>
<protein>
    <recommendedName>
        <fullName evidence="1">Serine hydroxymethyltransferase</fullName>
        <shortName evidence="1">SHMT</shortName>
        <shortName evidence="1">Serine methylase</shortName>
        <ecNumber evidence="1">2.1.2.1</ecNumber>
    </recommendedName>
</protein>
<sequence length="419" mass="45504">MIFDKVNYKEFDKEVWEAIQAEEKRQQNNIELIASENVVSKAVMAAQGSILTNKYAEGYPGRRYYGGTECVDVVESLAIERAKEIFGAKFANVQPHSGSQANCAAYMALIEPGDTVMGMDLAAGGHLTHGASVSFSGQTYNFVAYNVDEETGLLDYDAILKQAKEVQPKLIVAGASAYARTIDFAKFREIADAVGAKLMVDMAHIAGLVAAGLHPNPVPHAHITTTTTHKTLRGPRGGLILTNDEELIKKINSAIFPGIQGGPLEHVIAAKAVSFKEVLDPAFKDYAQKVIENSKAMAEVFLANPNFKVITGGTDNHLFLVDVTKVVENGKVAQHLLDEVNITLNKNSIPYEKLSPFKTSGIRIGSAAITARGFGVEEARKVAQLTIKALENAENEKALEEVRQEVRALTDQFPLYEGL</sequence>
<feature type="chain" id="PRO_1000006332" description="Serine hydroxymethyltransferase">
    <location>
        <begin position="1"/>
        <end position="419"/>
    </location>
</feature>
<feature type="binding site" evidence="1">
    <location>
        <position position="121"/>
    </location>
    <ligand>
        <name>(6S)-5,6,7,8-tetrahydrofolate</name>
        <dbReference type="ChEBI" id="CHEBI:57453"/>
    </ligand>
</feature>
<feature type="binding site" evidence="1">
    <location>
        <begin position="125"/>
        <end position="127"/>
    </location>
    <ligand>
        <name>(6S)-5,6,7,8-tetrahydrofolate</name>
        <dbReference type="ChEBI" id="CHEBI:57453"/>
    </ligand>
</feature>
<feature type="binding site" evidence="1">
    <location>
        <position position="246"/>
    </location>
    <ligand>
        <name>(6S)-5,6,7,8-tetrahydrofolate</name>
        <dbReference type="ChEBI" id="CHEBI:57453"/>
    </ligand>
</feature>
<feature type="binding site" evidence="1">
    <location>
        <begin position="355"/>
        <end position="357"/>
    </location>
    <ligand>
        <name>(6S)-5,6,7,8-tetrahydrofolate</name>
        <dbReference type="ChEBI" id="CHEBI:57453"/>
    </ligand>
</feature>
<feature type="site" description="Plays an important role in substrate specificity" evidence="1">
    <location>
        <position position="229"/>
    </location>
</feature>
<feature type="modified residue" description="N6-(pyridoxal phosphate)lysine" evidence="1">
    <location>
        <position position="230"/>
    </location>
</feature>
<accession>A4W0W9</accession>
<keyword id="KW-0028">Amino-acid biosynthesis</keyword>
<keyword id="KW-0963">Cytoplasm</keyword>
<keyword id="KW-0554">One-carbon metabolism</keyword>
<keyword id="KW-0663">Pyridoxal phosphate</keyword>
<keyword id="KW-0808">Transferase</keyword>
<reference key="1">
    <citation type="journal article" date="2007" name="PLoS ONE">
        <title>A glimpse of streptococcal toxic shock syndrome from comparative genomics of S. suis 2 Chinese isolates.</title>
        <authorList>
            <person name="Chen C."/>
            <person name="Tang J."/>
            <person name="Dong W."/>
            <person name="Wang C."/>
            <person name="Feng Y."/>
            <person name="Wang J."/>
            <person name="Zheng F."/>
            <person name="Pan X."/>
            <person name="Liu D."/>
            <person name="Li M."/>
            <person name="Song Y."/>
            <person name="Zhu X."/>
            <person name="Sun H."/>
            <person name="Feng T."/>
            <person name="Guo Z."/>
            <person name="Ju A."/>
            <person name="Ge J."/>
            <person name="Dong Y."/>
            <person name="Sun W."/>
            <person name="Jiang Y."/>
            <person name="Wang J."/>
            <person name="Yan J."/>
            <person name="Yang H."/>
            <person name="Wang X."/>
            <person name="Gao G.F."/>
            <person name="Yang R."/>
            <person name="Wang J."/>
            <person name="Yu J."/>
        </authorList>
    </citation>
    <scope>NUCLEOTIDE SEQUENCE [LARGE SCALE GENOMIC DNA]</scope>
    <source>
        <strain>98HAH33</strain>
    </source>
</reference>
<gene>
    <name evidence="1" type="primary">glyA</name>
    <name type="ordered locus">SSU98_0850</name>
</gene>
<proteinExistence type="inferred from homology"/>
<evidence type="ECO:0000255" key="1">
    <source>
        <dbReference type="HAMAP-Rule" id="MF_00051"/>
    </source>
</evidence>
<name>GLYA_STRS2</name>